<proteinExistence type="evidence at transcript level"/>
<dbReference type="EC" id="3.4.21.75"/>
<dbReference type="EMBL" id="M81431">
    <property type="protein sequence ID" value="AAA28467.1"/>
    <property type="molecule type" value="mRNA"/>
</dbReference>
<dbReference type="EMBL" id="L12370">
    <property type="protein sequence ID" value="AAA28545.1"/>
    <property type="molecule type" value="Genomic_DNA"/>
</dbReference>
<dbReference type="EMBL" id="L12369">
    <property type="protein sequence ID" value="AAA28545.1"/>
    <property type="status" value="JOINED"/>
    <property type="molecule type" value="Genomic_DNA"/>
</dbReference>
<dbReference type="EMBL" id="L12372">
    <property type="protein sequence ID" value="AAA28548.1"/>
    <property type="molecule type" value="mRNA"/>
</dbReference>
<dbReference type="EMBL" id="AE014297">
    <property type="protein sequence ID" value="AAN14051.1"/>
    <property type="molecule type" value="Genomic_DNA"/>
</dbReference>
<dbReference type="RefSeq" id="NP_733102.1">
    <molecule id="P30430-1"/>
    <property type="nucleotide sequence ID" value="NM_170654.2"/>
</dbReference>
<dbReference type="SMR" id="P30430"/>
<dbReference type="BioGRID" id="70692">
    <property type="interactions" value="6"/>
</dbReference>
<dbReference type="MEROPS" id="S08.048"/>
<dbReference type="GlyCosmos" id="P30430">
    <property type="glycosylation" value="10 sites, No reported glycans"/>
</dbReference>
<dbReference type="DNASU" id="47220"/>
<dbReference type="EnsemblMetazoa" id="FBtr0089982">
    <molecule id="P30430-1"/>
    <property type="protein sequence ID" value="FBpp0089025"/>
    <property type="gene ID" value="FBgn0004509"/>
</dbReference>
<dbReference type="GeneID" id="47220"/>
<dbReference type="AGR" id="FB:FBgn0004509"/>
<dbReference type="CTD" id="47220"/>
<dbReference type="FlyBase" id="FBgn0004509">
    <property type="gene designation" value="Fur1"/>
</dbReference>
<dbReference type="VEuPathDB" id="VectorBase:FBgn0004509"/>
<dbReference type="OrthoDB" id="300641at2759"/>
<dbReference type="BioGRID-ORCS" id="47220">
    <property type="hits" value="0 hits in 3 CRISPR screens"/>
</dbReference>
<dbReference type="ChiTaRS" id="Fur1">
    <property type="organism name" value="fly"/>
</dbReference>
<dbReference type="GenomeRNAi" id="47220"/>
<dbReference type="Proteomes" id="UP000000803">
    <property type="component" value="Chromosome 3R"/>
</dbReference>
<dbReference type="Bgee" id="FBgn0004509">
    <property type="expression patterns" value="Expressed in columnar neuron T1 (Drosophila) in insect head and 291 other cell types or tissues"/>
</dbReference>
<dbReference type="ExpressionAtlas" id="P30430">
    <property type="expression patterns" value="baseline and differential"/>
</dbReference>
<dbReference type="GO" id="GO:0000139">
    <property type="term" value="C:Golgi membrane"/>
    <property type="evidence" value="ECO:0000318"/>
    <property type="project" value="GO_Central"/>
</dbReference>
<dbReference type="GO" id="GO:0005886">
    <property type="term" value="C:plasma membrane"/>
    <property type="evidence" value="ECO:0000314"/>
    <property type="project" value="FlyBase"/>
</dbReference>
<dbReference type="GO" id="GO:0005802">
    <property type="term" value="C:trans-Golgi network"/>
    <property type="evidence" value="ECO:0000318"/>
    <property type="project" value="GO_Central"/>
</dbReference>
<dbReference type="GO" id="GO:0004252">
    <property type="term" value="F:serine-type endopeptidase activity"/>
    <property type="evidence" value="ECO:0000314"/>
    <property type="project" value="FlyBase"/>
</dbReference>
<dbReference type="GO" id="GO:0097688">
    <property type="term" value="P:glutamate receptor clustering"/>
    <property type="evidence" value="ECO:0000315"/>
    <property type="project" value="FlyBase"/>
</dbReference>
<dbReference type="GO" id="GO:0016486">
    <property type="term" value="P:peptide hormone processing"/>
    <property type="evidence" value="ECO:0000318"/>
    <property type="project" value="GO_Central"/>
</dbReference>
<dbReference type="GO" id="GO:0001941">
    <property type="term" value="P:postsynaptic membrane organization"/>
    <property type="evidence" value="ECO:0000315"/>
    <property type="project" value="FlyBase"/>
</dbReference>
<dbReference type="GO" id="GO:0097090">
    <property type="term" value="P:presynaptic membrane organization"/>
    <property type="evidence" value="ECO:0000315"/>
    <property type="project" value="FlyBase"/>
</dbReference>
<dbReference type="GO" id="GO:0008039">
    <property type="term" value="P:synaptic target recognition"/>
    <property type="evidence" value="ECO:0000315"/>
    <property type="project" value="FlyBase"/>
</dbReference>
<dbReference type="CDD" id="cd00064">
    <property type="entry name" value="FU"/>
    <property type="match status" value="1"/>
</dbReference>
<dbReference type="CDD" id="cd04059">
    <property type="entry name" value="Peptidases_S8_Protein_convertases_Kexins_Furin-like"/>
    <property type="match status" value="1"/>
</dbReference>
<dbReference type="FunFam" id="3.40.50.200:FF:000001">
    <property type="entry name" value="Furin 2, isoform B"/>
    <property type="match status" value="1"/>
</dbReference>
<dbReference type="FunFam" id="2.60.120.260:FF:000006">
    <property type="entry name" value="Proprotein convertase subtilisin/kexin type 5"/>
    <property type="match status" value="1"/>
</dbReference>
<dbReference type="FunFam" id="3.30.70.850:FF:000001">
    <property type="entry name" value="Proprotein convertase subtilisin/kexin type 5"/>
    <property type="match status" value="1"/>
</dbReference>
<dbReference type="Gene3D" id="2.60.120.260">
    <property type="entry name" value="Galactose-binding domain-like"/>
    <property type="match status" value="1"/>
</dbReference>
<dbReference type="Gene3D" id="3.30.70.850">
    <property type="entry name" value="Peptidase S8, pro-domain"/>
    <property type="match status" value="1"/>
</dbReference>
<dbReference type="Gene3D" id="3.40.50.200">
    <property type="entry name" value="Peptidase S8/S53 domain"/>
    <property type="match status" value="1"/>
</dbReference>
<dbReference type="InterPro" id="IPR006212">
    <property type="entry name" value="Furin_repeat"/>
</dbReference>
<dbReference type="InterPro" id="IPR008979">
    <property type="entry name" value="Galactose-bd-like_sf"/>
</dbReference>
<dbReference type="InterPro" id="IPR009030">
    <property type="entry name" value="Growth_fac_rcpt_cys_sf"/>
</dbReference>
<dbReference type="InterPro" id="IPR034182">
    <property type="entry name" value="Kexin/furin"/>
</dbReference>
<dbReference type="InterPro" id="IPR002884">
    <property type="entry name" value="P_dom"/>
</dbReference>
<dbReference type="InterPro" id="IPR000209">
    <property type="entry name" value="Peptidase_S8/S53_dom"/>
</dbReference>
<dbReference type="InterPro" id="IPR036852">
    <property type="entry name" value="Peptidase_S8/S53_dom_sf"/>
</dbReference>
<dbReference type="InterPro" id="IPR023827">
    <property type="entry name" value="Peptidase_S8_Asp-AS"/>
</dbReference>
<dbReference type="InterPro" id="IPR022398">
    <property type="entry name" value="Peptidase_S8_His-AS"/>
</dbReference>
<dbReference type="InterPro" id="IPR023828">
    <property type="entry name" value="Peptidase_S8_Ser-AS"/>
</dbReference>
<dbReference type="InterPro" id="IPR015500">
    <property type="entry name" value="Peptidase_S8_subtilisin-rel"/>
</dbReference>
<dbReference type="InterPro" id="IPR032815">
    <property type="entry name" value="S8_pro-domain"/>
</dbReference>
<dbReference type="InterPro" id="IPR038466">
    <property type="entry name" value="S8_pro-domain_sf"/>
</dbReference>
<dbReference type="PANTHER" id="PTHR42884:SF3">
    <property type="entry name" value="FURIN-LIKE PROTEASE 1, ISOFORMS 1_1-X_2"/>
    <property type="match status" value="1"/>
</dbReference>
<dbReference type="PANTHER" id="PTHR42884">
    <property type="entry name" value="PROPROTEIN CONVERTASE SUBTILISIN/KEXIN-RELATED"/>
    <property type="match status" value="1"/>
</dbReference>
<dbReference type="Pfam" id="PF01483">
    <property type="entry name" value="P_proprotein"/>
    <property type="match status" value="1"/>
</dbReference>
<dbReference type="Pfam" id="PF00082">
    <property type="entry name" value="Peptidase_S8"/>
    <property type="match status" value="1"/>
</dbReference>
<dbReference type="Pfam" id="PF16470">
    <property type="entry name" value="S8_pro-domain"/>
    <property type="match status" value="1"/>
</dbReference>
<dbReference type="PRINTS" id="PR00723">
    <property type="entry name" value="SUBTILISIN"/>
</dbReference>
<dbReference type="SMART" id="SM00261">
    <property type="entry name" value="FU"/>
    <property type="match status" value="2"/>
</dbReference>
<dbReference type="SUPFAM" id="SSF49785">
    <property type="entry name" value="Galactose-binding domain-like"/>
    <property type="match status" value="1"/>
</dbReference>
<dbReference type="SUPFAM" id="SSF57184">
    <property type="entry name" value="Growth factor receptor domain"/>
    <property type="match status" value="1"/>
</dbReference>
<dbReference type="SUPFAM" id="SSF54897">
    <property type="entry name" value="Protease propeptides/inhibitors"/>
    <property type="match status" value="1"/>
</dbReference>
<dbReference type="SUPFAM" id="SSF52743">
    <property type="entry name" value="Subtilisin-like"/>
    <property type="match status" value="1"/>
</dbReference>
<dbReference type="PROSITE" id="PS51829">
    <property type="entry name" value="P_HOMO_B"/>
    <property type="match status" value="1"/>
</dbReference>
<dbReference type="PROSITE" id="PS51892">
    <property type="entry name" value="SUBTILASE"/>
    <property type="match status" value="1"/>
</dbReference>
<dbReference type="PROSITE" id="PS00136">
    <property type="entry name" value="SUBTILASE_ASP"/>
    <property type="match status" value="1"/>
</dbReference>
<dbReference type="PROSITE" id="PS00137">
    <property type="entry name" value="SUBTILASE_HIS"/>
    <property type="match status" value="1"/>
</dbReference>
<dbReference type="PROSITE" id="PS00138">
    <property type="entry name" value="SUBTILASE_SER"/>
    <property type="match status" value="1"/>
</dbReference>
<name>FUR1C_DROME</name>
<evidence type="ECO:0000250" key="1"/>
<evidence type="ECO:0000255" key="2"/>
<evidence type="ECO:0000255" key="3">
    <source>
        <dbReference type="PROSITE-ProRule" id="PRU01173"/>
    </source>
</evidence>
<evidence type="ECO:0000255" key="4">
    <source>
        <dbReference type="PROSITE-ProRule" id="PRU01240"/>
    </source>
</evidence>
<evidence type="ECO:0000256" key="5">
    <source>
        <dbReference type="SAM" id="MobiDB-lite"/>
    </source>
</evidence>
<evidence type="ECO:0000269" key="6">
    <source>
    </source>
</evidence>
<evidence type="ECO:0000305" key="7"/>
<accession>P30430</accession>
<accession>Q27235</accession>
<accession>Q9VBR5</accession>
<reference key="1">
    <citation type="journal article" date="1992" name="J. Neurosci.">
        <title>A unique Kex2-like endoprotease from Drosophila melanogaster is expressed in the central nervous system during early embryogenesis.</title>
        <authorList>
            <person name="Hayflick J.S."/>
            <person name="Wolfgang W.J."/>
            <person name="Forte M.A."/>
            <person name="Thomas G."/>
        </authorList>
    </citation>
    <scope>NUCLEOTIDE SEQUENCE [MRNA]</scope>
    <source>
        <strain>Oregon-R</strain>
        <tissue>Head</tissue>
    </source>
</reference>
<reference key="2">
    <citation type="journal article" date="1993" name="EMBO J.">
        <title>Generation of structural and functional diversity in furin-like proteins in Drosophila melanogaster by alternative splicing of the DFur1 gene.</title>
        <authorList>
            <person name="Roebroek A.J.M."/>
            <person name="Creemers J.W.M."/>
            <person name="Pauli I.G.L."/>
            <person name="Bogaert T."/>
            <person name="Van de Ven W.J.M."/>
        </authorList>
    </citation>
    <scope>NUCLEOTIDE SEQUENCE [GENOMIC DNA]</scope>
    <scope>ALTERNATIVE SPLICING</scope>
    <scope>SUBCELLULAR LOCATION</scope>
    <scope>TISSUE SPECIFICITY</scope>
    <scope>DEVELOPMENTAL STAGE</scope>
    <source>
        <strain>Oregon-R</strain>
        <strain>Tuebingen</strain>
        <tissue>Embryo</tissue>
    </source>
</reference>
<reference key="3">
    <citation type="journal article" date="2000" name="Science">
        <title>The genome sequence of Drosophila melanogaster.</title>
        <authorList>
            <person name="Adams M.D."/>
            <person name="Celniker S.E."/>
            <person name="Holt R.A."/>
            <person name="Evans C.A."/>
            <person name="Gocayne J.D."/>
            <person name="Amanatides P.G."/>
            <person name="Scherer S.E."/>
            <person name="Li P.W."/>
            <person name="Hoskins R.A."/>
            <person name="Galle R.F."/>
            <person name="George R.A."/>
            <person name="Lewis S.E."/>
            <person name="Richards S."/>
            <person name="Ashburner M."/>
            <person name="Henderson S.N."/>
            <person name="Sutton G.G."/>
            <person name="Wortman J.R."/>
            <person name="Yandell M.D."/>
            <person name="Zhang Q."/>
            <person name="Chen L.X."/>
            <person name="Brandon R.C."/>
            <person name="Rogers Y.-H.C."/>
            <person name="Blazej R.G."/>
            <person name="Champe M."/>
            <person name="Pfeiffer B.D."/>
            <person name="Wan K.H."/>
            <person name="Doyle C."/>
            <person name="Baxter E.G."/>
            <person name="Helt G."/>
            <person name="Nelson C.R."/>
            <person name="Miklos G.L.G."/>
            <person name="Abril J.F."/>
            <person name="Agbayani A."/>
            <person name="An H.-J."/>
            <person name="Andrews-Pfannkoch C."/>
            <person name="Baldwin D."/>
            <person name="Ballew R.M."/>
            <person name="Basu A."/>
            <person name="Baxendale J."/>
            <person name="Bayraktaroglu L."/>
            <person name="Beasley E.M."/>
            <person name="Beeson K.Y."/>
            <person name="Benos P.V."/>
            <person name="Berman B.P."/>
            <person name="Bhandari D."/>
            <person name="Bolshakov S."/>
            <person name="Borkova D."/>
            <person name="Botchan M.R."/>
            <person name="Bouck J."/>
            <person name="Brokstein P."/>
            <person name="Brottier P."/>
            <person name="Burtis K.C."/>
            <person name="Busam D.A."/>
            <person name="Butler H."/>
            <person name="Cadieu E."/>
            <person name="Center A."/>
            <person name="Chandra I."/>
            <person name="Cherry J.M."/>
            <person name="Cawley S."/>
            <person name="Dahlke C."/>
            <person name="Davenport L.B."/>
            <person name="Davies P."/>
            <person name="de Pablos B."/>
            <person name="Delcher A."/>
            <person name="Deng Z."/>
            <person name="Mays A.D."/>
            <person name="Dew I."/>
            <person name="Dietz S.M."/>
            <person name="Dodson K."/>
            <person name="Doup L.E."/>
            <person name="Downes M."/>
            <person name="Dugan-Rocha S."/>
            <person name="Dunkov B.C."/>
            <person name="Dunn P."/>
            <person name="Durbin K.J."/>
            <person name="Evangelista C.C."/>
            <person name="Ferraz C."/>
            <person name="Ferriera S."/>
            <person name="Fleischmann W."/>
            <person name="Fosler C."/>
            <person name="Gabrielian A.E."/>
            <person name="Garg N.S."/>
            <person name="Gelbart W.M."/>
            <person name="Glasser K."/>
            <person name="Glodek A."/>
            <person name="Gong F."/>
            <person name="Gorrell J.H."/>
            <person name="Gu Z."/>
            <person name="Guan P."/>
            <person name="Harris M."/>
            <person name="Harris N.L."/>
            <person name="Harvey D.A."/>
            <person name="Heiman T.J."/>
            <person name="Hernandez J.R."/>
            <person name="Houck J."/>
            <person name="Hostin D."/>
            <person name="Houston K.A."/>
            <person name="Howland T.J."/>
            <person name="Wei M.-H."/>
            <person name="Ibegwam C."/>
            <person name="Jalali M."/>
            <person name="Kalush F."/>
            <person name="Karpen G.H."/>
            <person name="Ke Z."/>
            <person name="Kennison J.A."/>
            <person name="Ketchum K.A."/>
            <person name="Kimmel B.E."/>
            <person name="Kodira C.D."/>
            <person name="Kraft C.L."/>
            <person name="Kravitz S."/>
            <person name="Kulp D."/>
            <person name="Lai Z."/>
            <person name="Lasko P."/>
            <person name="Lei Y."/>
            <person name="Levitsky A.A."/>
            <person name="Li J.H."/>
            <person name="Li Z."/>
            <person name="Liang Y."/>
            <person name="Lin X."/>
            <person name="Liu X."/>
            <person name="Mattei B."/>
            <person name="McIntosh T.C."/>
            <person name="McLeod M.P."/>
            <person name="McPherson D."/>
            <person name="Merkulov G."/>
            <person name="Milshina N.V."/>
            <person name="Mobarry C."/>
            <person name="Morris J."/>
            <person name="Moshrefi A."/>
            <person name="Mount S.M."/>
            <person name="Moy M."/>
            <person name="Murphy B."/>
            <person name="Murphy L."/>
            <person name="Muzny D.M."/>
            <person name="Nelson D.L."/>
            <person name="Nelson D.R."/>
            <person name="Nelson K.A."/>
            <person name="Nixon K."/>
            <person name="Nusskern D.R."/>
            <person name="Pacleb J.M."/>
            <person name="Palazzolo M."/>
            <person name="Pittman G.S."/>
            <person name="Pan S."/>
            <person name="Pollard J."/>
            <person name="Puri V."/>
            <person name="Reese M.G."/>
            <person name="Reinert K."/>
            <person name="Remington K."/>
            <person name="Saunders R.D.C."/>
            <person name="Scheeler F."/>
            <person name="Shen H."/>
            <person name="Shue B.C."/>
            <person name="Siden-Kiamos I."/>
            <person name="Simpson M."/>
            <person name="Skupski M.P."/>
            <person name="Smith T.J."/>
            <person name="Spier E."/>
            <person name="Spradling A.C."/>
            <person name="Stapleton M."/>
            <person name="Strong R."/>
            <person name="Sun E."/>
            <person name="Svirskas R."/>
            <person name="Tector C."/>
            <person name="Turner R."/>
            <person name="Venter E."/>
            <person name="Wang A.H."/>
            <person name="Wang X."/>
            <person name="Wang Z.-Y."/>
            <person name="Wassarman D.A."/>
            <person name="Weinstock G.M."/>
            <person name="Weissenbach J."/>
            <person name="Williams S.M."/>
            <person name="Woodage T."/>
            <person name="Worley K.C."/>
            <person name="Wu D."/>
            <person name="Yang S."/>
            <person name="Yao Q.A."/>
            <person name="Ye J."/>
            <person name="Yeh R.-F."/>
            <person name="Zaveri J.S."/>
            <person name="Zhan M."/>
            <person name="Zhang G."/>
            <person name="Zhao Q."/>
            <person name="Zheng L."/>
            <person name="Zheng X.H."/>
            <person name="Zhong F.N."/>
            <person name="Zhong W."/>
            <person name="Zhou X."/>
            <person name="Zhu S.C."/>
            <person name="Zhu X."/>
            <person name="Smith H.O."/>
            <person name="Gibbs R.A."/>
            <person name="Myers E.W."/>
            <person name="Rubin G.M."/>
            <person name="Venter J.C."/>
        </authorList>
    </citation>
    <scope>NUCLEOTIDE SEQUENCE [LARGE SCALE GENOMIC DNA]</scope>
    <source>
        <strain>Berkeley</strain>
    </source>
</reference>
<reference key="4">
    <citation type="journal article" date="2002" name="Genome Biol.">
        <title>Annotation of the Drosophila melanogaster euchromatic genome: a systematic review.</title>
        <authorList>
            <person name="Misra S."/>
            <person name="Crosby M.A."/>
            <person name="Mungall C.J."/>
            <person name="Matthews B.B."/>
            <person name="Campbell K.S."/>
            <person name="Hradecky P."/>
            <person name="Huang Y."/>
            <person name="Kaminker J.S."/>
            <person name="Millburn G.H."/>
            <person name="Prochnik S.E."/>
            <person name="Smith C.D."/>
            <person name="Tupy J.L."/>
            <person name="Whitfield E.J."/>
            <person name="Bayraktaroglu L."/>
            <person name="Berman B.P."/>
            <person name="Bettencourt B.R."/>
            <person name="Celniker S.E."/>
            <person name="de Grey A.D.N.J."/>
            <person name="Drysdale R.A."/>
            <person name="Harris N.L."/>
            <person name="Richter J."/>
            <person name="Russo S."/>
            <person name="Schroeder A.J."/>
            <person name="Shu S.Q."/>
            <person name="Stapleton M."/>
            <person name="Yamada C."/>
            <person name="Ashburner M."/>
            <person name="Gelbart W.M."/>
            <person name="Rubin G.M."/>
            <person name="Lewis S.E."/>
        </authorList>
    </citation>
    <scope>GENOME REANNOTATION</scope>
    <scope>ALTERNATIVE SPLICING</scope>
    <source>
        <strain>Berkeley</strain>
    </source>
</reference>
<sequence>MKNDVVRWSRQPTSNTTNSSSSSRSDSNSTHKHRSKSNKLNARQLGSNAARSCQQRSSVATTLEDEQQTIIECDIGNFNFDCNLFKTSFLTQHKQKRSGKSSSKSKSNRSRPLAKTKAVFLLALQFSAVVFLCNINVGFVAGSVATAASSAGGSSPAAPSSAPSSPPTVAVPPPPPPSSALKVDPNGQSPVLPPYVLDYETGGKAKLTPNNGKFGQSGSSGSNNNHIVGHYTHTWAVHIPNGDNGMADAVAKDHGFVNLGKIFDDHYHFAHHKVSKRSLSPATHHQTRLDDDDRVHWAKQQRAKSRSKRDFIRMRPSRTSSRAMSMVDAMSFNDSKWPQMWYLNRGGGLDMNVIPAWKMGITGKGVVVTILDDGLESDHPDIQDNYDPKASYDVNSHDDDPMPHYDMTDSNRHGTRCAGEVAATANNSFCAVGIAYGASVGGVRMLDGDVTDAVEARSLSLNPQHIDIYSASWGPDDDGKTVDGPGELASRAFIEGTTKGRGGKGSIFIWASGNGGREQDNCNCDGYTNSIWTLSISSATEEGHVPWYSEKCSSTLATTYSSGGQGEKQVVTTDLHHSCTVSHTGTSASAPLAAGIAALVLQSNQNLTWRDLQHIVVRTAKPANLKDPSWSRNGVGRRVSHSFGYGLMDAAEMVRVARNWKAVPEQQRCEINAPHVDKVIPPRTHITLQLTVNHCRSVNYLEHVQAKITLTSQRRGDIQLFLRSPANTSVTLLTPRIHDNSRSGFNQWPFMSVHTWGESPQGNWQLEIHNEGRYMAQITQWDMIFYGTETPAQPDDVANPSQSNQFNLYGNDMAHNDVEYDSTGQWRNMQQVGEVGMTRDHSNTAACLKWSDRKCLECNDSAYMFEDQCYDVCPVHTYPLDKFQAEEDEQDDEVTRGPVNPYSSSPMDHSLLMSNSLDDKQDPLQAEDRRRRSSLTQLVEVPSRVCAACDRSCLECYGALASQCSTCSPGSQLRKILNETFCYAYVVRSTGMASVVDISKMDDRDTQQYMTGTTVLLLVSVIFTLMGVAVAGGIVYHRRAMARSNELYSRVSLVPGDESDSDEDELFTAHFPARKSGVNIYRDEAPSEKIFEEDEISHLVP</sequence>
<protein>
    <recommendedName>
        <fullName>Furin-like protease 1, isoform 1-CRR</fullName>
        <shortName>Furin-1</shortName>
        <ecNumber>3.4.21.75</ecNumber>
    </recommendedName>
    <alternativeName>
        <fullName>Kex2-like endoprotease 1</fullName>
    </alternativeName>
    <alternativeName>
        <fullName>dKLIP-1</fullName>
    </alternativeName>
</protein>
<gene>
    <name type="primary">Fur1</name>
    <name type="ORF">CG10772</name>
</gene>
<organism>
    <name type="scientific">Drosophila melanogaster</name>
    <name type="common">Fruit fly</name>
    <dbReference type="NCBI Taxonomy" id="7227"/>
    <lineage>
        <taxon>Eukaryota</taxon>
        <taxon>Metazoa</taxon>
        <taxon>Ecdysozoa</taxon>
        <taxon>Arthropoda</taxon>
        <taxon>Hexapoda</taxon>
        <taxon>Insecta</taxon>
        <taxon>Pterygota</taxon>
        <taxon>Neoptera</taxon>
        <taxon>Endopterygota</taxon>
        <taxon>Diptera</taxon>
        <taxon>Brachycera</taxon>
        <taxon>Muscomorpha</taxon>
        <taxon>Ephydroidea</taxon>
        <taxon>Drosophilidae</taxon>
        <taxon>Drosophila</taxon>
        <taxon>Sophophora</taxon>
    </lineage>
</organism>
<feature type="signal peptide" evidence="2">
    <location>
        <begin position="1"/>
        <end status="unknown"/>
    </location>
</feature>
<feature type="propeptide" id="PRO_0000027022" evidence="2">
    <location>
        <begin status="unknown"/>
        <end position="309"/>
    </location>
</feature>
<feature type="chain" id="PRO_0000027023" description="Furin-like protease 1, isoform 1-CRR">
    <location>
        <begin position="310"/>
        <end position="1101"/>
    </location>
</feature>
<feature type="transmembrane region" description="Helical" evidence="2">
    <location>
        <begin position="119"/>
        <end position="139"/>
    </location>
</feature>
<feature type="transmembrane region" description="Helical" evidence="2">
    <location>
        <begin position="1014"/>
        <end position="1034"/>
    </location>
</feature>
<feature type="domain" description="Peptidase S8" evidence="4">
    <location>
        <begin position="340"/>
        <end position="654"/>
    </location>
</feature>
<feature type="domain" description="P/Homo B" evidence="3">
    <location>
        <begin position="662"/>
        <end position="791"/>
    </location>
</feature>
<feature type="region of interest" description="Disordered" evidence="5">
    <location>
        <begin position="1"/>
        <end position="57"/>
    </location>
</feature>
<feature type="region of interest" description="Disordered" evidence="5">
    <location>
        <begin position="150"/>
        <end position="187"/>
    </location>
</feature>
<feature type="region of interest" description="Disordered" evidence="5">
    <location>
        <begin position="886"/>
        <end position="915"/>
    </location>
</feature>
<feature type="compositionally biased region" description="Low complexity" evidence="5">
    <location>
        <begin position="13"/>
        <end position="28"/>
    </location>
</feature>
<feature type="compositionally biased region" description="Polar residues" evidence="5">
    <location>
        <begin position="38"/>
        <end position="57"/>
    </location>
</feature>
<feature type="compositionally biased region" description="Low complexity" evidence="5">
    <location>
        <begin position="150"/>
        <end position="163"/>
    </location>
</feature>
<feature type="compositionally biased region" description="Pro residues" evidence="5">
    <location>
        <begin position="164"/>
        <end position="178"/>
    </location>
</feature>
<feature type="compositionally biased region" description="Polar residues" evidence="5">
    <location>
        <begin position="901"/>
        <end position="915"/>
    </location>
</feature>
<feature type="active site" description="Charge relay system" evidence="4">
    <location>
        <position position="372"/>
    </location>
</feature>
<feature type="active site" description="Charge relay system" evidence="4">
    <location>
        <position position="413"/>
    </location>
</feature>
<feature type="active site" description="Charge relay system" evidence="4">
    <location>
        <position position="587"/>
    </location>
</feature>
<feature type="glycosylation site" description="N-linked (GlcNAc...) asparagine" evidence="2">
    <location>
        <position position="15"/>
    </location>
</feature>
<feature type="glycosylation site" description="N-linked (GlcNAc...) asparagine" evidence="2">
    <location>
        <position position="18"/>
    </location>
</feature>
<feature type="glycosylation site" description="N-linked (GlcNAc...) asparagine" evidence="2">
    <location>
        <position position="28"/>
    </location>
</feature>
<feature type="glycosylation site" description="N-linked (GlcNAc...) asparagine" evidence="2">
    <location>
        <position position="108"/>
    </location>
</feature>
<feature type="glycosylation site" description="N-linked (GlcNAc...) asparagine" evidence="2">
    <location>
        <position position="333"/>
    </location>
</feature>
<feature type="glycosylation site" description="N-linked (GlcNAc...) asparagine" evidence="2">
    <location>
        <position position="426"/>
    </location>
</feature>
<feature type="glycosylation site" description="N-linked (GlcNAc...) asparagine" evidence="2">
    <location>
        <position position="606"/>
    </location>
</feature>
<feature type="glycosylation site" description="N-linked (GlcNAc...) asparagine" evidence="2">
    <location>
        <position position="727"/>
    </location>
</feature>
<feature type="glycosylation site" description="N-linked (GlcNAc...) asparagine" evidence="2">
    <location>
        <position position="859"/>
    </location>
</feature>
<feature type="glycosylation site" description="N-linked (GlcNAc...) asparagine" evidence="2">
    <location>
        <position position="978"/>
    </location>
</feature>
<feature type="disulfide bond" evidence="1">
    <location>
        <begin position="430"/>
        <end position="579"/>
    </location>
</feature>
<feature type="disulfide bond" evidence="1">
    <location>
        <begin position="522"/>
        <end position="552"/>
    </location>
</feature>
<feature type="disulfide bond" evidence="1">
    <location>
        <begin position="669"/>
        <end position="695"/>
    </location>
</feature>
<feature type="sequence conflict" description="In Ref. 1; AAA28467." evidence="7" ref="1">
    <original>T</original>
    <variation>I</variation>
    <location>
        <position position="1014"/>
    </location>
</feature>
<keyword id="KW-0025">Alternative splicing</keyword>
<keyword id="KW-0165">Cleavage on pair of basic residues</keyword>
<keyword id="KW-1015">Disulfide bond</keyword>
<keyword id="KW-0325">Glycoprotein</keyword>
<keyword id="KW-0333">Golgi apparatus</keyword>
<keyword id="KW-0378">Hydrolase</keyword>
<keyword id="KW-0472">Membrane</keyword>
<keyword id="KW-0645">Protease</keyword>
<keyword id="KW-1185">Reference proteome</keyword>
<keyword id="KW-0720">Serine protease</keyword>
<keyword id="KW-0732">Signal</keyword>
<keyword id="KW-0812">Transmembrane</keyword>
<keyword id="KW-1133">Transmembrane helix</keyword>
<keyword id="KW-0865">Zymogen</keyword>
<comment type="function">
    <text evidence="1">Furin is likely to represent the ubiquitous endoprotease activity within constitutive secretory pathways and capable of cleavage at the RX(K/R)R consensus motif.</text>
</comment>
<comment type="catalytic activity">
    <reaction>
        <text>Release of mature proteins from their proproteins by cleavage of -Arg-Xaa-Yaa-Arg-|-Zaa- bonds, where Xaa can be any amino acid and Yaa is Arg or Lys. Releases albumin, complement component C3 and von Willebrand factor from their respective precursors.</text>
        <dbReference type="EC" id="3.4.21.75"/>
    </reaction>
</comment>
<comment type="cofactor">
    <cofactor evidence="1">
        <name>Ca(2+)</name>
        <dbReference type="ChEBI" id="CHEBI:29108"/>
    </cofactor>
</comment>
<comment type="subcellular location">
    <subcellularLocation>
        <location evidence="6">Golgi apparatus membrane</location>
        <topology evidence="6">Multi-pass membrane protein</topology>
    </subcellularLocation>
</comment>
<comment type="alternative products">
    <event type="alternative splicing"/>
    <isoform>
        <id>P30430-1</id>
        <name>1-CRR</name>
        <name>A</name>
        <sequence type="displayed"/>
    </isoform>
    <isoform>
        <id>P26016-2</id>
        <name>1</name>
        <name>F</name>
        <sequence type="external"/>
    </isoform>
    <isoform>
        <id>P26016-1</id>
        <name>1-X</name>
        <name>E</name>
        <sequence type="external"/>
    </isoform>
    <isoform>
        <id>P26016-3</id>
        <name>2</name>
        <name>C</name>
        <name>D</name>
        <name>F</name>
        <sequence type="external"/>
    </isoform>
</comment>
<comment type="tissue specificity">
    <text evidence="6">In adults, isoform 1-CRR is expressed in CNS, fat body, and female reproductive tissues, and in embryos, in anal pads, hindgut, developing antennomaxillary complex, oenocytes, clipeolabrum, pharynx, trachea, CNS and developing posterior spiracles.</text>
</comment>
<comment type="developmental stage">
    <text evidence="6">Isoform 1-CRR is expressed in embryos, larvae, pupae and adults.</text>
</comment>
<comment type="similarity">
    <text evidence="7">Belongs to the peptidase S8 family. Furin subfamily.</text>
</comment>